<feature type="signal peptide" evidence="3">
    <location>
        <begin position="1"/>
        <end position="23"/>
    </location>
</feature>
<feature type="chain" id="PRO_0000024668" description="Pleiotrophin-A">
    <location>
        <begin position="24"/>
        <end position="161"/>
    </location>
</feature>
<feature type="region of interest" description="Chondroitin sulfate binding" evidence="1">
    <location>
        <begin position="86"/>
        <end position="93"/>
    </location>
</feature>
<feature type="region of interest" description="Chondroitin sulfate binding" evidence="1">
    <location>
        <begin position="117"/>
        <end position="125"/>
    </location>
</feature>
<feature type="region of interest" description="Disordered" evidence="4">
    <location>
        <begin position="136"/>
        <end position="161"/>
    </location>
</feature>
<feature type="region of interest" description="Chondroitin sulfate A binding" evidence="1">
    <location>
        <begin position="141"/>
        <end position="161"/>
    </location>
</feature>
<feature type="disulfide bond" evidence="1">
    <location>
        <begin position="41"/>
        <end position="70"/>
    </location>
</feature>
<feature type="disulfide bond" evidence="1">
    <location>
        <begin position="49"/>
        <end position="79"/>
    </location>
</feature>
<feature type="disulfide bond" evidence="1">
    <location>
        <begin position="56"/>
        <end position="83"/>
    </location>
</feature>
<feature type="disulfide bond" evidence="1">
    <location>
        <begin position="93"/>
        <end position="125"/>
    </location>
</feature>
<feature type="disulfide bond" evidence="1">
    <location>
        <begin position="103"/>
        <end position="135"/>
    </location>
</feature>
<evidence type="ECO:0000250" key="1">
    <source>
        <dbReference type="UniProtKB" id="P21246"/>
    </source>
</evidence>
<evidence type="ECO:0000250" key="2">
    <source>
        <dbReference type="UniProtKB" id="P48533"/>
    </source>
</evidence>
<evidence type="ECO:0000255" key="3"/>
<evidence type="ECO:0000256" key="4">
    <source>
        <dbReference type="SAM" id="MobiDB-lite"/>
    </source>
</evidence>
<evidence type="ECO:0000269" key="5">
    <source>
    </source>
</evidence>
<evidence type="ECO:0000305" key="6"/>
<accession>P48532</accession>
<accession>Q6GLN4</accession>
<dbReference type="EMBL" id="D42059">
    <property type="protein sequence ID" value="BAA07659.1"/>
    <property type="molecule type" value="mRNA"/>
</dbReference>
<dbReference type="EMBL" id="BC074426">
    <property type="protein sequence ID" value="AAH74426.1"/>
    <property type="molecule type" value="mRNA"/>
</dbReference>
<dbReference type="PIR" id="JC4274">
    <property type="entry name" value="JC4274"/>
</dbReference>
<dbReference type="RefSeq" id="NP_001086286.1">
    <property type="nucleotide sequence ID" value="NM_001092817.1"/>
</dbReference>
<dbReference type="SMR" id="P48532"/>
<dbReference type="DNASU" id="444715"/>
<dbReference type="GeneID" id="444715"/>
<dbReference type="KEGG" id="xla:444715"/>
<dbReference type="AGR" id="Xenbase:XB-GENE-865472"/>
<dbReference type="CTD" id="444715"/>
<dbReference type="Xenbase" id="XB-GENE-865472">
    <property type="gene designation" value="ptn.L"/>
</dbReference>
<dbReference type="OrthoDB" id="8818336at2759"/>
<dbReference type="Proteomes" id="UP000186698">
    <property type="component" value="Chromosome 3L"/>
</dbReference>
<dbReference type="Bgee" id="444715">
    <property type="expression patterns" value="Expressed in internal ear and 8 other cell types or tissues"/>
</dbReference>
<dbReference type="GO" id="GO:0005576">
    <property type="term" value="C:extracellular region"/>
    <property type="evidence" value="ECO:0000318"/>
    <property type="project" value="GO_Central"/>
</dbReference>
<dbReference type="GO" id="GO:0005615">
    <property type="term" value="C:extracellular space"/>
    <property type="evidence" value="ECO:0000250"/>
    <property type="project" value="UniProtKB"/>
</dbReference>
<dbReference type="GO" id="GO:0035374">
    <property type="term" value="F:chondroitin sulfate binding"/>
    <property type="evidence" value="ECO:0000250"/>
    <property type="project" value="UniProtKB"/>
</dbReference>
<dbReference type="GO" id="GO:0008083">
    <property type="term" value="F:growth factor activity"/>
    <property type="evidence" value="ECO:0000250"/>
    <property type="project" value="UniProtKB"/>
</dbReference>
<dbReference type="GO" id="GO:0008201">
    <property type="term" value="F:heparin binding"/>
    <property type="evidence" value="ECO:0000250"/>
    <property type="project" value="UniProtKB"/>
</dbReference>
<dbReference type="GO" id="GO:0042742">
    <property type="term" value="P:defense response to bacterium"/>
    <property type="evidence" value="ECO:0007669"/>
    <property type="project" value="UniProtKB-KW"/>
</dbReference>
<dbReference type="GO" id="GO:0051781">
    <property type="term" value="P:positive regulation of cell division"/>
    <property type="evidence" value="ECO:0007669"/>
    <property type="project" value="UniProtKB-KW"/>
</dbReference>
<dbReference type="GO" id="GO:0008284">
    <property type="term" value="P:positive regulation of cell population proliferation"/>
    <property type="evidence" value="ECO:0000250"/>
    <property type="project" value="UniProtKB"/>
</dbReference>
<dbReference type="GO" id="GO:0009617">
    <property type="term" value="P:response to bacterium"/>
    <property type="evidence" value="ECO:0000250"/>
    <property type="project" value="UniProtKB"/>
</dbReference>
<dbReference type="FunFam" id="2.20.60.10:FF:000001">
    <property type="entry name" value="Pleiotrophin"/>
    <property type="match status" value="1"/>
</dbReference>
<dbReference type="FunFam" id="2.30.90.10:FF:000001">
    <property type="entry name" value="Pleiotrophin"/>
    <property type="match status" value="1"/>
</dbReference>
<dbReference type="Gene3D" id="2.30.90.10">
    <property type="entry name" value="Heparin-binding Growth Factor, Midkine, Chain A- C-terminal Domain"/>
    <property type="match status" value="1"/>
</dbReference>
<dbReference type="Gene3D" id="2.20.60.10">
    <property type="entry name" value="Pleiotrophin/Midkine, N-terminal domain"/>
    <property type="match status" value="1"/>
</dbReference>
<dbReference type="InterPro" id="IPR000762">
    <property type="entry name" value="Midkine_heparin-bd_GF"/>
</dbReference>
<dbReference type="InterPro" id="IPR020090">
    <property type="entry name" value="PTN/MK_C_dom"/>
</dbReference>
<dbReference type="InterPro" id="IPR038130">
    <property type="entry name" value="PTN/MK_C_dom_sf"/>
</dbReference>
<dbReference type="InterPro" id="IPR020091">
    <property type="entry name" value="PTN/MK_diS_sf"/>
</dbReference>
<dbReference type="InterPro" id="IPR020089">
    <property type="entry name" value="PTN/MK_N_dom"/>
</dbReference>
<dbReference type="InterPro" id="IPR037122">
    <property type="entry name" value="PTN/MK_N_dom_sf"/>
</dbReference>
<dbReference type="InterPro" id="IPR020092">
    <property type="entry name" value="PTN_MK_heparin-bd_GF_CS"/>
</dbReference>
<dbReference type="PANTHER" id="PTHR13850:SF1">
    <property type="entry name" value="PLEIOTROPHIN"/>
    <property type="match status" value="1"/>
</dbReference>
<dbReference type="PANTHER" id="PTHR13850">
    <property type="entry name" value="PLEIOTROPHIN FAMILY MEMBER"/>
    <property type="match status" value="1"/>
</dbReference>
<dbReference type="Pfam" id="PF01091">
    <property type="entry name" value="PTN_MK_C"/>
    <property type="match status" value="1"/>
</dbReference>
<dbReference type="Pfam" id="PF05196">
    <property type="entry name" value="PTN_MK_N"/>
    <property type="match status" value="1"/>
</dbReference>
<dbReference type="PRINTS" id="PR00269">
    <property type="entry name" value="PTNMIDKINE"/>
</dbReference>
<dbReference type="SMART" id="SM00193">
    <property type="entry name" value="PTN"/>
    <property type="match status" value="1"/>
</dbReference>
<dbReference type="SUPFAM" id="SSF57288">
    <property type="entry name" value="Midkine"/>
    <property type="match status" value="2"/>
</dbReference>
<dbReference type="PROSITE" id="PS00619">
    <property type="entry name" value="PTN_MK_1"/>
    <property type="match status" value="1"/>
</dbReference>
<dbReference type="PROSITE" id="PS00620">
    <property type="entry name" value="PTN_MK_2"/>
    <property type="match status" value="1"/>
</dbReference>
<organism>
    <name type="scientific">Xenopus laevis</name>
    <name type="common">African clawed frog</name>
    <dbReference type="NCBI Taxonomy" id="8355"/>
    <lineage>
        <taxon>Eukaryota</taxon>
        <taxon>Metazoa</taxon>
        <taxon>Chordata</taxon>
        <taxon>Craniata</taxon>
        <taxon>Vertebrata</taxon>
        <taxon>Euteleostomi</taxon>
        <taxon>Amphibia</taxon>
        <taxon>Batrachia</taxon>
        <taxon>Anura</taxon>
        <taxon>Pipoidea</taxon>
        <taxon>Pipidae</taxon>
        <taxon>Xenopodinae</taxon>
        <taxon>Xenopus</taxon>
        <taxon>Xenopus</taxon>
    </lineage>
</organism>
<keyword id="KW-0044">Antibiotic</keyword>
<keyword id="KW-0929">Antimicrobial</keyword>
<keyword id="KW-0217">Developmental protein</keyword>
<keyword id="KW-1015">Disulfide bond</keyword>
<keyword id="KW-0339">Growth factor</keyword>
<keyword id="KW-0358">Heparin-binding</keyword>
<keyword id="KW-0497">Mitogen</keyword>
<keyword id="KW-1185">Reference proteome</keyword>
<keyword id="KW-0964">Secreted</keyword>
<keyword id="KW-0732">Signal</keyword>
<name>PTNA_XENLA</name>
<proteinExistence type="evidence at transcript level"/>
<protein>
    <recommendedName>
        <fullName evidence="6">Pleiotrophin-A</fullName>
        <shortName>PTN-A</shortName>
    </recommendedName>
    <alternativeName>
        <fullName>Pleiotrophic factor-beta-1</fullName>
        <shortName>PTF-beta-1</shortName>
        <shortName>X-PTF-beta1</shortName>
    </alternativeName>
</protein>
<comment type="function">
    <text evidence="1 2">Secreted growth factor that mediates its signal through cell-surface proteoglycan and non-proteoglycan receptors (By similarity). Binds cell-surface proteoglycan receptor via their chondroitin sulfate (CS) groups (By similarity). Thereby regulates many processes like cell proliferation, cell survival, cell growth, cell differentiation and cell migration (By similarity). Has antibacterial activity against both Gram-positive and Gram-negative bacteria (By similarity).</text>
</comment>
<comment type="subcellular location">
    <subcellularLocation>
        <location evidence="1">Secreted</location>
    </subcellularLocation>
</comment>
<comment type="tissue specificity">
    <text evidence="5">Expressed in high levels in brain and eye. Lower levels in bone. In the tailbud embryo stage, it is expressed exclusively in the central nervous system, especially in the hind region of the brain.</text>
</comment>
<comment type="similarity">
    <text evidence="6">Belongs to the pleiotrophin family.</text>
</comment>
<sequence>MRHQHGLFMLALLAFLFVITVLGTDSGKKEKQEKKVKKSDCGEWQWSVCVPTSGDCGLGTREGTRSGKECKQTIKTQKCKIPCNWKKQFGAECKYQFQEWGDCDPDTGLKTRSGSLKRALHNAECQKTVTLSKPCGKVTKPKLQESKKKKKEGKNKEKLLD</sequence>
<reference key="1">
    <citation type="journal article" date="1995" name="Biochem. Biophys. Res. Commun.">
        <title>Developmental and differential regulations in gene expression of Xenopus pleiotrophic factors-alpha and -beta.</title>
        <authorList>
            <person name="Tsujimura A."/>
            <person name="Yasojima K."/>
            <person name="Kuboki Y."/>
            <person name="Suzuki A."/>
            <person name="Ueno N."/>
            <person name="Shiokawa K."/>
            <person name="Hashimoto-Gotoh T."/>
        </authorList>
    </citation>
    <scope>NUCLEOTIDE SEQUENCE [MRNA]</scope>
    <scope>TISSUE SPECIFICITY</scope>
    <source>
        <tissue>Brain</tissue>
    </source>
</reference>
<reference key="2">
    <citation type="submission" date="2004-06" db="EMBL/GenBank/DDBJ databases">
        <authorList>
            <consortium name="NIH - Xenopus Gene Collection (XGC) project"/>
        </authorList>
    </citation>
    <scope>NUCLEOTIDE SEQUENCE [LARGE SCALE MRNA]</scope>
    <source>
        <tissue>Eye</tissue>
    </source>
</reference>
<gene>
    <name type="primary">ptn-a</name>
</gene>